<accession>Q32EF3</accession>
<reference key="1">
    <citation type="journal article" date="2005" name="Nucleic Acids Res.">
        <title>Genome dynamics and diversity of Shigella species, the etiologic agents of bacillary dysentery.</title>
        <authorList>
            <person name="Yang F."/>
            <person name="Yang J."/>
            <person name="Zhang X."/>
            <person name="Chen L."/>
            <person name="Jiang Y."/>
            <person name="Yan Y."/>
            <person name="Tang X."/>
            <person name="Wang J."/>
            <person name="Xiong Z."/>
            <person name="Dong J."/>
            <person name="Xue Y."/>
            <person name="Zhu Y."/>
            <person name="Xu X."/>
            <person name="Sun L."/>
            <person name="Chen S."/>
            <person name="Nie H."/>
            <person name="Peng J."/>
            <person name="Xu J."/>
            <person name="Wang Y."/>
            <person name="Yuan Z."/>
            <person name="Wen Y."/>
            <person name="Yao Z."/>
            <person name="Shen Y."/>
            <person name="Qiang B."/>
            <person name="Hou Y."/>
            <person name="Yu J."/>
            <person name="Jin Q."/>
        </authorList>
    </citation>
    <scope>NUCLEOTIDE SEQUENCE [LARGE SCALE GENOMIC DNA]</scope>
    <source>
        <strain>Sd197</strain>
    </source>
</reference>
<comment type="catalytic activity">
    <reaction evidence="1">
        <text>1-(5-phospho-beta-D-ribosyl)-5-[(5-phospho-beta-D-ribosylamino)methylideneamino]imidazole-4-carboxamide = 5-[(5-phospho-1-deoxy-D-ribulos-1-ylimino)methylamino]-1-(5-phospho-beta-D-ribosyl)imidazole-4-carboxamide</text>
        <dbReference type="Rhea" id="RHEA:15469"/>
        <dbReference type="ChEBI" id="CHEBI:58435"/>
        <dbReference type="ChEBI" id="CHEBI:58525"/>
        <dbReference type="EC" id="5.3.1.16"/>
    </reaction>
</comment>
<comment type="pathway">
    <text evidence="1">Amino-acid biosynthesis; L-histidine biosynthesis; L-histidine from 5-phospho-alpha-D-ribose 1-diphosphate: step 4/9.</text>
</comment>
<comment type="subcellular location">
    <subcellularLocation>
        <location evidence="1">Cytoplasm</location>
    </subcellularLocation>
</comment>
<comment type="similarity">
    <text evidence="1">Belongs to the HisA/HisF family.</text>
</comment>
<gene>
    <name evidence="1" type="primary">hisA</name>
    <name type="ordered locus">SDY_2217</name>
</gene>
<proteinExistence type="inferred from homology"/>
<evidence type="ECO:0000255" key="1">
    <source>
        <dbReference type="HAMAP-Rule" id="MF_01014"/>
    </source>
</evidence>
<name>HIS4_SHIDS</name>
<protein>
    <recommendedName>
        <fullName evidence="1">1-(5-phosphoribosyl)-5-[(5-phosphoribosylamino)methylideneamino] imidazole-4-carboxamide isomerase</fullName>
        <ecNumber evidence="1">5.3.1.16</ecNumber>
    </recommendedName>
    <alternativeName>
        <fullName evidence="1">Phosphoribosylformimino-5-aminoimidazole carboxamide ribotide isomerase</fullName>
    </alternativeName>
</protein>
<feature type="chain" id="PRO_0000229082" description="1-(5-phosphoribosyl)-5-[(5-phosphoribosylamino)methylideneamino] imidazole-4-carboxamide isomerase">
    <location>
        <begin position="1"/>
        <end position="246"/>
    </location>
</feature>
<feature type="active site" description="Proton acceptor" evidence="1">
    <location>
        <position position="8"/>
    </location>
</feature>
<feature type="active site" description="Proton donor" evidence="1">
    <location>
        <position position="130"/>
    </location>
</feature>
<sequence>MMIIPALDLIDGTVVRLHQGDYGKQRDYGNDPLPRLQDYAAQGAEVLHLVDLTGAKDPAKRQIPLIKTLVAGVNVPVQVGGGVRSEEDVAALLEAGVARVVVGSTAVKSPEMVKGWFERFGADALVLALDVRIDEQGNKQVAVSGWQENSGVSLEQLVETYLPVGLKHVLCTDISRDGTLAGSNVSLYEEVCARYPQVAFQSSGGIGDINDVAALRGTGVRGVIVGRALLEGKFTVKEAIACWQNA</sequence>
<dbReference type="EC" id="5.3.1.16" evidence="1"/>
<dbReference type="EMBL" id="CP000034">
    <property type="protein sequence ID" value="ABB62302.1"/>
    <property type="molecule type" value="Genomic_DNA"/>
</dbReference>
<dbReference type="SMR" id="Q32EF3"/>
<dbReference type="STRING" id="300267.SDY_2217"/>
<dbReference type="EnsemblBacteria" id="ABB62302">
    <property type="protein sequence ID" value="ABB62302"/>
    <property type="gene ID" value="SDY_2217"/>
</dbReference>
<dbReference type="KEGG" id="sdy:SDY_2217"/>
<dbReference type="HOGENOM" id="CLU_048577_1_2_6"/>
<dbReference type="UniPathway" id="UPA00031">
    <property type="reaction ID" value="UER00009"/>
</dbReference>
<dbReference type="Proteomes" id="UP000002716">
    <property type="component" value="Chromosome"/>
</dbReference>
<dbReference type="GO" id="GO:0005737">
    <property type="term" value="C:cytoplasm"/>
    <property type="evidence" value="ECO:0007669"/>
    <property type="project" value="UniProtKB-SubCell"/>
</dbReference>
<dbReference type="GO" id="GO:0003949">
    <property type="term" value="F:1-(5-phosphoribosyl)-5-[(5-phosphoribosylamino)methylideneamino]imidazole-4-carboxamide isomerase activity"/>
    <property type="evidence" value="ECO:0007669"/>
    <property type="project" value="UniProtKB-UniRule"/>
</dbReference>
<dbReference type="GO" id="GO:0000105">
    <property type="term" value="P:L-histidine biosynthetic process"/>
    <property type="evidence" value="ECO:0007669"/>
    <property type="project" value="UniProtKB-UniRule"/>
</dbReference>
<dbReference type="GO" id="GO:0000162">
    <property type="term" value="P:L-tryptophan biosynthetic process"/>
    <property type="evidence" value="ECO:0007669"/>
    <property type="project" value="TreeGrafter"/>
</dbReference>
<dbReference type="CDD" id="cd04732">
    <property type="entry name" value="HisA"/>
    <property type="match status" value="1"/>
</dbReference>
<dbReference type="FunFam" id="3.20.20.70:FF:000009">
    <property type="entry name" value="1-(5-phosphoribosyl)-5-[(5-phosphoribosylamino)methylideneamino] imidazole-4-carboxamide isomerase"/>
    <property type="match status" value="1"/>
</dbReference>
<dbReference type="Gene3D" id="3.20.20.70">
    <property type="entry name" value="Aldolase class I"/>
    <property type="match status" value="1"/>
</dbReference>
<dbReference type="HAMAP" id="MF_01014">
    <property type="entry name" value="HisA"/>
    <property type="match status" value="1"/>
</dbReference>
<dbReference type="InterPro" id="IPR013785">
    <property type="entry name" value="Aldolase_TIM"/>
</dbReference>
<dbReference type="InterPro" id="IPR006062">
    <property type="entry name" value="His_biosynth"/>
</dbReference>
<dbReference type="InterPro" id="IPR006063">
    <property type="entry name" value="HisA_bact_arch"/>
</dbReference>
<dbReference type="InterPro" id="IPR044524">
    <property type="entry name" value="Isoase_HisA-like"/>
</dbReference>
<dbReference type="InterPro" id="IPR023016">
    <property type="entry name" value="Isoase_HisA-like_bact"/>
</dbReference>
<dbReference type="InterPro" id="IPR011060">
    <property type="entry name" value="RibuloseP-bd_barrel"/>
</dbReference>
<dbReference type="NCBIfam" id="TIGR00007">
    <property type="entry name" value="1-(5-phosphoribosyl)-5-[(5-phosphoribosylamino)methylideneamino]imidazole-4-carboxamide isomerase"/>
    <property type="match status" value="1"/>
</dbReference>
<dbReference type="PANTHER" id="PTHR43090">
    <property type="entry name" value="1-(5-PHOSPHORIBOSYL)-5-[(5-PHOSPHORIBOSYLAMINO)METHYLIDENEAMINO] IMIDAZOLE-4-CARBOXAMIDE ISOMERASE"/>
    <property type="match status" value="1"/>
</dbReference>
<dbReference type="PANTHER" id="PTHR43090:SF2">
    <property type="entry name" value="1-(5-PHOSPHORIBOSYL)-5-[(5-PHOSPHORIBOSYLAMINO)METHYLIDENEAMINO] IMIDAZOLE-4-CARBOXAMIDE ISOMERASE"/>
    <property type="match status" value="1"/>
</dbReference>
<dbReference type="Pfam" id="PF00977">
    <property type="entry name" value="His_biosynth"/>
    <property type="match status" value="1"/>
</dbReference>
<dbReference type="SUPFAM" id="SSF51366">
    <property type="entry name" value="Ribulose-phoshate binding barrel"/>
    <property type="match status" value="1"/>
</dbReference>
<keyword id="KW-0028">Amino-acid biosynthesis</keyword>
<keyword id="KW-0963">Cytoplasm</keyword>
<keyword id="KW-0368">Histidine biosynthesis</keyword>
<keyword id="KW-0413">Isomerase</keyword>
<keyword id="KW-1185">Reference proteome</keyword>
<organism>
    <name type="scientific">Shigella dysenteriae serotype 1 (strain Sd197)</name>
    <dbReference type="NCBI Taxonomy" id="300267"/>
    <lineage>
        <taxon>Bacteria</taxon>
        <taxon>Pseudomonadati</taxon>
        <taxon>Pseudomonadota</taxon>
        <taxon>Gammaproteobacteria</taxon>
        <taxon>Enterobacterales</taxon>
        <taxon>Enterobacteriaceae</taxon>
        <taxon>Shigella</taxon>
    </lineage>
</organism>